<protein>
    <recommendedName>
        <fullName evidence="1">Quinolinate synthase</fullName>
        <ecNumber evidence="1">2.5.1.72</ecNumber>
    </recommendedName>
</protein>
<keyword id="KW-0004">4Fe-4S</keyword>
<keyword id="KW-0963">Cytoplasm</keyword>
<keyword id="KW-0408">Iron</keyword>
<keyword id="KW-0411">Iron-sulfur</keyword>
<keyword id="KW-0479">Metal-binding</keyword>
<keyword id="KW-0662">Pyridine nucleotide biosynthesis</keyword>
<keyword id="KW-1185">Reference proteome</keyword>
<keyword id="KW-0808">Transferase</keyword>
<name>NADA_NEIMB</name>
<reference key="1">
    <citation type="journal article" date="2000" name="Science">
        <title>Complete genome sequence of Neisseria meningitidis serogroup B strain MC58.</title>
        <authorList>
            <person name="Tettelin H."/>
            <person name="Saunders N.J."/>
            <person name="Heidelberg J.F."/>
            <person name="Jeffries A.C."/>
            <person name="Nelson K.E."/>
            <person name="Eisen J.A."/>
            <person name="Ketchum K.A."/>
            <person name="Hood D.W."/>
            <person name="Peden J.F."/>
            <person name="Dodson R.J."/>
            <person name="Nelson W.C."/>
            <person name="Gwinn M.L."/>
            <person name="DeBoy R.T."/>
            <person name="Peterson J.D."/>
            <person name="Hickey E.K."/>
            <person name="Haft D.H."/>
            <person name="Salzberg S.L."/>
            <person name="White O."/>
            <person name="Fleischmann R.D."/>
            <person name="Dougherty B.A."/>
            <person name="Mason T.M."/>
            <person name="Ciecko A."/>
            <person name="Parksey D.S."/>
            <person name="Blair E."/>
            <person name="Cittone H."/>
            <person name="Clark E.B."/>
            <person name="Cotton M.D."/>
            <person name="Utterback T.R."/>
            <person name="Khouri H.M."/>
            <person name="Qin H."/>
            <person name="Vamathevan J.J."/>
            <person name="Gill J."/>
            <person name="Scarlato V."/>
            <person name="Masignani V."/>
            <person name="Pizza M."/>
            <person name="Grandi G."/>
            <person name="Sun L."/>
            <person name="Smith H.O."/>
            <person name="Fraser C.M."/>
            <person name="Moxon E.R."/>
            <person name="Rappuoli R."/>
            <person name="Venter J.C."/>
        </authorList>
    </citation>
    <scope>NUCLEOTIDE SEQUENCE [LARGE SCALE GENOMIC DNA]</scope>
    <source>
        <strain>ATCC BAA-335 / MC58</strain>
    </source>
</reference>
<accession>Q9K105</accession>
<feature type="chain" id="PRO_0000155764" description="Quinolinate synthase">
    <location>
        <begin position="1"/>
        <end position="370"/>
    </location>
</feature>
<feature type="binding site" evidence="1">
    <location>
        <position position="62"/>
    </location>
    <ligand>
        <name>iminosuccinate</name>
        <dbReference type="ChEBI" id="CHEBI:77875"/>
    </ligand>
</feature>
<feature type="binding site" evidence="1">
    <location>
        <position position="83"/>
    </location>
    <ligand>
        <name>iminosuccinate</name>
        <dbReference type="ChEBI" id="CHEBI:77875"/>
    </ligand>
</feature>
<feature type="binding site" evidence="1">
    <location>
        <position position="128"/>
    </location>
    <ligand>
        <name>[4Fe-4S] cluster</name>
        <dbReference type="ChEBI" id="CHEBI:49883"/>
    </ligand>
</feature>
<feature type="binding site" evidence="1">
    <location>
        <begin position="154"/>
        <end position="156"/>
    </location>
    <ligand>
        <name>iminosuccinate</name>
        <dbReference type="ChEBI" id="CHEBI:77875"/>
    </ligand>
</feature>
<feature type="binding site" evidence="1">
    <location>
        <position position="171"/>
    </location>
    <ligand>
        <name>iminosuccinate</name>
        <dbReference type="ChEBI" id="CHEBI:77875"/>
    </ligand>
</feature>
<feature type="binding site" evidence="1">
    <location>
        <position position="215"/>
    </location>
    <ligand>
        <name>[4Fe-4S] cluster</name>
        <dbReference type="ChEBI" id="CHEBI:49883"/>
    </ligand>
</feature>
<feature type="binding site" evidence="1">
    <location>
        <begin position="241"/>
        <end position="243"/>
    </location>
    <ligand>
        <name>iminosuccinate</name>
        <dbReference type="ChEBI" id="CHEBI:77875"/>
    </ligand>
</feature>
<feature type="binding site" evidence="1">
    <location>
        <position position="258"/>
    </location>
    <ligand>
        <name>iminosuccinate</name>
        <dbReference type="ChEBI" id="CHEBI:77875"/>
    </ligand>
</feature>
<feature type="binding site" evidence="1">
    <location>
        <position position="312"/>
    </location>
    <ligand>
        <name>[4Fe-4S] cluster</name>
        <dbReference type="ChEBI" id="CHEBI:49883"/>
    </ligand>
</feature>
<proteinExistence type="inferred from homology"/>
<comment type="function">
    <text evidence="1">Catalyzes the condensation of iminoaspartate with dihydroxyacetone phosphate to form quinolinate.</text>
</comment>
<comment type="catalytic activity">
    <reaction evidence="1">
        <text>iminosuccinate + dihydroxyacetone phosphate = quinolinate + phosphate + 2 H2O + H(+)</text>
        <dbReference type="Rhea" id="RHEA:25888"/>
        <dbReference type="ChEBI" id="CHEBI:15377"/>
        <dbReference type="ChEBI" id="CHEBI:15378"/>
        <dbReference type="ChEBI" id="CHEBI:29959"/>
        <dbReference type="ChEBI" id="CHEBI:43474"/>
        <dbReference type="ChEBI" id="CHEBI:57642"/>
        <dbReference type="ChEBI" id="CHEBI:77875"/>
        <dbReference type="EC" id="2.5.1.72"/>
    </reaction>
    <physiologicalReaction direction="left-to-right" evidence="1">
        <dbReference type="Rhea" id="RHEA:25889"/>
    </physiologicalReaction>
</comment>
<comment type="cofactor">
    <cofactor evidence="1">
        <name>[4Fe-4S] cluster</name>
        <dbReference type="ChEBI" id="CHEBI:49883"/>
    </cofactor>
    <text evidence="1">Binds 1 [4Fe-4S] cluster per subunit.</text>
</comment>
<comment type="pathway">
    <text evidence="1">Cofactor biosynthesis; NAD(+) biosynthesis; quinolinate from iminoaspartate: step 1/1.</text>
</comment>
<comment type="subcellular location">
    <subcellularLocation>
        <location evidence="1">Cytoplasm</location>
    </subcellularLocation>
</comment>
<comment type="similarity">
    <text evidence="1">Belongs to the quinolinate synthase family. Type 1 subfamily.</text>
</comment>
<comment type="caution">
    <text>The gene name nadA has also been given to Neisseria adhesin A, a protein used in serogroup B vaccines.</text>
</comment>
<gene>
    <name evidence="1" type="primary">nadA</name>
    <name type="ordered locus">NMB0394</name>
</gene>
<evidence type="ECO:0000255" key="1">
    <source>
        <dbReference type="HAMAP-Rule" id="MF_00567"/>
    </source>
</evidence>
<sequence length="370" mass="40164">MQTAARRSFDYDMPLIQTPTSACQIRQAWAKVADTPDRETADRLKDEIKALLKEKNAVLVAHYYVDPLIQDLALETGGCVGDSLEMARFGAEHEAGTLVVAGVRFMGESAKILCPEKTVLMPDLEAECSLDLGCPEEAFSAFCDQHPDRTVVVYANTSAAVKARADWVVTSSVALEIVSYLKSRGEKLIWGPDRHLGDYICRETGADMLLWQGSCIVHNEFKGQELAALKAEHPEAVVLVHPESPQSVIELGDVVGSTSKLLKAAVSRPEKKFIVATDLGILHEMQKQAPDKQFIAAPTAGNGGSCKSCAFCPWMAMNSLGGIKYALTSGRNEILLDRKLGEAAKLPLQRMLDFAAGLKKKDVFNGMGPA</sequence>
<organism>
    <name type="scientific">Neisseria meningitidis serogroup B (strain ATCC BAA-335 / MC58)</name>
    <dbReference type="NCBI Taxonomy" id="122586"/>
    <lineage>
        <taxon>Bacteria</taxon>
        <taxon>Pseudomonadati</taxon>
        <taxon>Pseudomonadota</taxon>
        <taxon>Betaproteobacteria</taxon>
        <taxon>Neisseriales</taxon>
        <taxon>Neisseriaceae</taxon>
        <taxon>Neisseria</taxon>
    </lineage>
</organism>
<dbReference type="EC" id="2.5.1.72" evidence="1"/>
<dbReference type="EMBL" id="AE002098">
    <property type="protein sequence ID" value="AAF40834.1"/>
    <property type="molecule type" value="Genomic_DNA"/>
</dbReference>
<dbReference type="PIR" id="B81204">
    <property type="entry name" value="B81204"/>
</dbReference>
<dbReference type="RefSeq" id="NP_273443.1">
    <property type="nucleotide sequence ID" value="NC_003112.2"/>
</dbReference>
<dbReference type="RefSeq" id="WP_002222012.1">
    <property type="nucleotide sequence ID" value="NC_003112.2"/>
</dbReference>
<dbReference type="SMR" id="Q9K105"/>
<dbReference type="FunCoup" id="Q9K105">
    <property type="interactions" value="450"/>
</dbReference>
<dbReference type="STRING" id="122586.NMB0394"/>
<dbReference type="PaxDb" id="122586-NMB0394"/>
<dbReference type="KEGG" id="nme:NMB0394"/>
<dbReference type="PATRIC" id="fig|122586.8.peg.493"/>
<dbReference type="HOGENOM" id="CLU_047382_1_0_4"/>
<dbReference type="InParanoid" id="Q9K105"/>
<dbReference type="OrthoDB" id="9801204at2"/>
<dbReference type="UniPathway" id="UPA00253">
    <property type="reaction ID" value="UER00327"/>
</dbReference>
<dbReference type="Proteomes" id="UP000000425">
    <property type="component" value="Chromosome"/>
</dbReference>
<dbReference type="GO" id="GO:0005829">
    <property type="term" value="C:cytosol"/>
    <property type="evidence" value="ECO:0000318"/>
    <property type="project" value="GO_Central"/>
</dbReference>
<dbReference type="GO" id="GO:0051539">
    <property type="term" value="F:4 iron, 4 sulfur cluster binding"/>
    <property type="evidence" value="ECO:0000318"/>
    <property type="project" value="GO_Central"/>
</dbReference>
<dbReference type="GO" id="GO:0046872">
    <property type="term" value="F:metal ion binding"/>
    <property type="evidence" value="ECO:0007669"/>
    <property type="project" value="UniProtKB-KW"/>
</dbReference>
<dbReference type="GO" id="GO:0008987">
    <property type="term" value="F:quinolinate synthetase A activity"/>
    <property type="evidence" value="ECO:0000318"/>
    <property type="project" value="GO_Central"/>
</dbReference>
<dbReference type="GO" id="GO:0034628">
    <property type="term" value="P:'de novo' NAD biosynthetic process from L-aspartate"/>
    <property type="evidence" value="ECO:0000318"/>
    <property type="project" value="GO_Central"/>
</dbReference>
<dbReference type="FunFam" id="3.40.50.10800:FF:000001">
    <property type="entry name" value="Quinolinate synthase A"/>
    <property type="match status" value="1"/>
</dbReference>
<dbReference type="FunFam" id="3.40.50.10800:FF:000003">
    <property type="entry name" value="Quinolinate synthase A"/>
    <property type="match status" value="1"/>
</dbReference>
<dbReference type="Gene3D" id="3.40.50.10800">
    <property type="entry name" value="NadA-like"/>
    <property type="match status" value="3"/>
</dbReference>
<dbReference type="HAMAP" id="MF_00567">
    <property type="entry name" value="NadA_type1"/>
    <property type="match status" value="1"/>
</dbReference>
<dbReference type="InterPro" id="IPR003473">
    <property type="entry name" value="NadA"/>
</dbReference>
<dbReference type="InterPro" id="IPR036094">
    <property type="entry name" value="NadA_sf"/>
</dbReference>
<dbReference type="InterPro" id="IPR023513">
    <property type="entry name" value="Quinolinate_synth_A_type1"/>
</dbReference>
<dbReference type="NCBIfam" id="TIGR00550">
    <property type="entry name" value="nadA"/>
    <property type="match status" value="1"/>
</dbReference>
<dbReference type="NCBIfam" id="NF006877">
    <property type="entry name" value="PRK09375.1-1"/>
    <property type="match status" value="1"/>
</dbReference>
<dbReference type="NCBIfam" id="NF006878">
    <property type="entry name" value="PRK09375.1-2"/>
    <property type="match status" value="1"/>
</dbReference>
<dbReference type="PANTHER" id="PTHR30573:SF0">
    <property type="entry name" value="QUINOLINATE SYNTHASE, CHLOROPLASTIC"/>
    <property type="match status" value="1"/>
</dbReference>
<dbReference type="PANTHER" id="PTHR30573">
    <property type="entry name" value="QUINOLINATE SYNTHETASE A"/>
    <property type="match status" value="1"/>
</dbReference>
<dbReference type="Pfam" id="PF02445">
    <property type="entry name" value="NadA"/>
    <property type="match status" value="1"/>
</dbReference>
<dbReference type="SUPFAM" id="SSF142754">
    <property type="entry name" value="NadA-like"/>
    <property type="match status" value="1"/>
</dbReference>